<comment type="function">
    <text evidence="1">Negatively regulates transcription of bacterial ribonucleotide reductase nrd genes and operons by binding to NrdR-boxes.</text>
</comment>
<comment type="cofactor">
    <cofactor evidence="1">
        <name>Zn(2+)</name>
        <dbReference type="ChEBI" id="CHEBI:29105"/>
    </cofactor>
    <text evidence="1">Binds 1 zinc ion.</text>
</comment>
<comment type="similarity">
    <text evidence="1">Belongs to the NrdR family.</text>
</comment>
<evidence type="ECO:0000255" key="1">
    <source>
        <dbReference type="HAMAP-Rule" id="MF_00440"/>
    </source>
</evidence>
<organism>
    <name type="scientific">Petrotoga mobilis (strain DSM 10674 / SJ95)</name>
    <dbReference type="NCBI Taxonomy" id="403833"/>
    <lineage>
        <taxon>Bacteria</taxon>
        <taxon>Thermotogati</taxon>
        <taxon>Thermotogota</taxon>
        <taxon>Thermotogae</taxon>
        <taxon>Petrotogales</taxon>
        <taxon>Petrotogaceae</taxon>
        <taxon>Petrotoga</taxon>
    </lineage>
</organism>
<accession>A9BFB9</accession>
<name>NRDR_PETMO</name>
<gene>
    <name evidence="1" type="primary">nrdR</name>
    <name type="ordered locus">Pmob_0157</name>
</gene>
<dbReference type="EMBL" id="CP000879">
    <property type="protein sequence ID" value="ABX30904.1"/>
    <property type="molecule type" value="Genomic_DNA"/>
</dbReference>
<dbReference type="RefSeq" id="WP_012208011.1">
    <property type="nucleotide sequence ID" value="NC_010003.1"/>
</dbReference>
<dbReference type="SMR" id="A9BFB9"/>
<dbReference type="STRING" id="403833.Pmob_0157"/>
<dbReference type="KEGG" id="pmo:Pmob_0157"/>
<dbReference type="eggNOG" id="COG1327">
    <property type="taxonomic scope" value="Bacteria"/>
</dbReference>
<dbReference type="HOGENOM" id="CLU_108412_0_0_0"/>
<dbReference type="OrthoDB" id="9807461at2"/>
<dbReference type="Proteomes" id="UP000000789">
    <property type="component" value="Chromosome"/>
</dbReference>
<dbReference type="GO" id="GO:0005524">
    <property type="term" value="F:ATP binding"/>
    <property type="evidence" value="ECO:0007669"/>
    <property type="project" value="UniProtKB-KW"/>
</dbReference>
<dbReference type="GO" id="GO:0003677">
    <property type="term" value="F:DNA binding"/>
    <property type="evidence" value="ECO:0007669"/>
    <property type="project" value="UniProtKB-KW"/>
</dbReference>
<dbReference type="GO" id="GO:0008270">
    <property type="term" value="F:zinc ion binding"/>
    <property type="evidence" value="ECO:0007669"/>
    <property type="project" value="UniProtKB-UniRule"/>
</dbReference>
<dbReference type="GO" id="GO:0045892">
    <property type="term" value="P:negative regulation of DNA-templated transcription"/>
    <property type="evidence" value="ECO:0007669"/>
    <property type="project" value="UniProtKB-UniRule"/>
</dbReference>
<dbReference type="HAMAP" id="MF_00440">
    <property type="entry name" value="NrdR"/>
    <property type="match status" value="1"/>
</dbReference>
<dbReference type="InterPro" id="IPR005144">
    <property type="entry name" value="ATP-cone_dom"/>
</dbReference>
<dbReference type="InterPro" id="IPR055173">
    <property type="entry name" value="NrdR-like_N"/>
</dbReference>
<dbReference type="InterPro" id="IPR003796">
    <property type="entry name" value="RNR_NrdR-like"/>
</dbReference>
<dbReference type="NCBIfam" id="TIGR00244">
    <property type="entry name" value="transcriptional regulator NrdR"/>
    <property type="match status" value="1"/>
</dbReference>
<dbReference type="PANTHER" id="PTHR30455">
    <property type="entry name" value="TRANSCRIPTIONAL REPRESSOR NRDR"/>
    <property type="match status" value="1"/>
</dbReference>
<dbReference type="PANTHER" id="PTHR30455:SF2">
    <property type="entry name" value="TRANSCRIPTIONAL REPRESSOR NRDR"/>
    <property type="match status" value="1"/>
</dbReference>
<dbReference type="Pfam" id="PF03477">
    <property type="entry name" value="ATP-cone"/>
    <property type="match status" value="1"/>
</dbReference>
<dbReference type="Pfam" id="PF22811">
    <property type="entry name" value="Zn_ribbon_NrdR"/>
    <property type="match status" value="1"/>
</dbReference>
<dbReference type="PROSITE" id="PS51161">
    <property type="entry name" value="ATP_CONE"/>
    <property type="match status" value="1"/>
</dbReference>
<sequence>MKCPFCGYEETKVLDSRPVSNGTSIRRRRECLQCQARFTTYERYEQTRIRIIKKDGRRELYDRKKLMNGILKACEKRPVSTDQIEEIVDNIEEQLRRSGNSEIYSSEIGDKVMEQLKSIDQVAYVRFASVYKEFRDLDSFLQAIRELKNS</sequence>
<reference key="1">
    <citation type="submission" date="2007-11" db="EMBL/GenBank/DDBJ databases">
        <title>Complete sequence of Petroga mobilis SJ95.</title>
        <authorList>
            <consortium name="US DOE Joint Genome Institute"/>
            <person name="Copeland A."/>
            <person name="Lucas S."/>
            <person name="Lapidus A."/>
            <person name="Barry K."/>
            <person name="Glavina del Rio T."/>
            <person name="Dalin E."/>
            <person name="Tice H."/>
            <person name="Pitluck S."/>
            <person name="Meincke L."/>
            <person name="Brettin T."/>
            <person name="Bruce D."/>
            <person name="Detter J.C."/>
            <person name="Han C."/>
            <person name="Kuske C.R."/>
            <person name="Schmutz J."/>
            <person name="Larimer F."/>
            <person name="Land M."/>
            <person name="Hauser L."/>
            <person name="Kyrpides N."/>
            <person name="Mikhailova N."/>
            <person name="Noll K."/>
            <person name="Richardson P."/>
        </authorList>
    </citation>
    <scope>NUCLEOTIDE SEQUENCE [LARGE SCALE GENOMIC DNA]</scope>
    <source>
        <strain>DSM 10674 / SJ95</strain>
    </source>
</reference>
<protein>
    <recommendedName>
        <fullName evidence="1">Transcriptional repressor NrdR</fullName>
    </recommendedName>
</protein>
<feature type="chain" id="PRO_1000080792" description="Transcriptional repressor NrdR">
    <location>
        <begin position="1"/>
        <end position="150"/>
    </location>
</feature>
<feature type="domain" description="ATP-cone" evidence="1">
    <location>
        <begin position="49"/>
        <end position="139"/>
    </location>
</feature>
<feature type="zinc finger region" evidence="1">
    <location>
        <begin position="3"/>
        <end position="34"/>
    </location>
</feature>
<keyword id="KW-0067">ATP-binding</keyword>
<keyword id="KW-0238">DNA-binding</keyword>
<keyword id="KW-0479">Metal-binding</keyword>
<keyword id="KW-0547">Nucleotide-binding</keyword>
<keyword id="KW-0678">Repressor</keyword>
<keyword id="KW-0804">Transcription</keyword>
<keyword id="KW-0805">Transcription regulation</keyword>
<keyword id="KW-0862">Zinc</keyword>
<keyword id="KW-0863">Zinc-finger</keyword>
<proteinExistence type="inferred from homology"/>